<keyword id="KW-0472">Membrane</keyword>
<keyword id="KW-0496">Mitochondrion</keyword>
<keyword id="KW-0999">Mitochondrion inner membrane</keyword>
<keyword id="KW-0812">Transmembrane</keyword>
<keyword id="KW-1133">Transmembrane helix</keyword>
<dbReference type="EMBL" id="ABSV01002006">
    <property type="protein sequence ID" value="EDZ69702.1"/>
    <property type="molecule type" value="Genomic_DNA"/>
</dbReference>
<dbReference type="SMR" id="B5VQU2"/>
<dbReference type="OrthoDB" id="10981at4893"/>
<dbReference type="Proteomes" id="UP000008988">
    <property type="component" value="Unassembled WGS sequence"/>
</dbReference>
<dbReference type="GO" id="GO:0005743">
    <property type="term" value="C:mitochondrial inner membrane"/>
    <property type="evidence" value="ECO:0007669"/>
    <property type="project" value="UniProtKB-SubCell"/>
</dbReference>
<comment type="function">
    <text evidence="1">Component of the MICOS complex, a large protein complex of the mitochondrial inner membrane that plays crucial roles in the maintenance of crista junctions, inner membrane architecture, and formation of contact sites to the outer membrane.</text>
</comment>
<comment type="subunit">
    <text evidence="1">Component of the mitochondrial contact site and cristae organizing system (MICOS) complex.</text>
</comment>
<comment type="subcellular location">
    <subcellularLocation>
        <location evidence="1">Mitochondrion inner membrane</location>
        <topology evidence="3">Multi-pass membrane protein</topology>
    </subcellularLocation>
</comment>
<comment type="similarity">
    <text evidence="3">Belongs to the apolipoprotein O/MICOS complex subunit Mic27 family.</text>
</comment>
<organism>
    <name type="scientific">Saccharomyces cerevisiae (strain AWRI1631)</name>
    <name type="common">Baker's yeast</name>
    <dbReference type="NCBI Taxonomy" id="545124"/>
    <lineage>
        <taxon>Eukaryota</taxon>
        <taxon>Fungi</taxon>
        <taxon>Dikarya</taxon>
        <taxon>Ascomycota</taxon>
        <taxon>Saccharomycotina</taxon>
        <taxon>Saccharomycetes</taxon>
        <taxon>Saccharomycetales</taxon>
        <taxon>Saccharomycetaceae</taxon>
        <taxon>Saccharomyces</taxon>
    </lineage>
</organism>
<name>MIC27_YEAS6</name>
<proteinExistence type="inferred from homology"/>
<feature type="chain" id="PRO_0000399839" description="MICOS complex subunit MIC27">
    <location>
        <begin position="1"/>
        <end position="234"/>
    </location>
</feature>
<feature type="topological domain" description="Mitochondrial intermembrane" evidence="2">
    <location>
        <begin position="1"/>
        <end position="100"/>
    </location>
</feature>
<feature type="transmembrane region" description="Helical" evidence="2">
    <location>
        <begin position="101"/>
        <end position="120"/>
    </location>
</feature>
<feature type="topological domain" description="Mitochondrial matrix" evidence="2">
    <location>
        <begin position="121"/>
        <end position="141"/>
    </location>
</feature>
<feature type="transmembrane region" description="Helical" evidence="2">
    <location>
        <begin position="142"/>
        <end position="161"/>
    </location>
</feature>
<feature type="topological domain" description="Mitochondrial intermembrane" evidence="2">
    <location>
        <begin position="162"/>
        <end position="234"/>
    </location>
</feature>
<accession>B5VQU2</accession>
<protein>
    <recommendedName>
        <fullName>MICOS complex subunit MIC27</fullName>
    </recommendedName>
</protein>
<sequence>MVNFYDDVDESKSHGEFPLIPVVLQNSSELSVRTIPTGNEIIESVHLTKWLRKYRNALASQLDRYEKGWQSKIANFRLQVQHVINYSRKNIFNVDSENKHTVVPGSLIALGAFFSGSIAVNRSNWGAKRLIFGHKSSILEKLCTSLPSRILLPWVLAAATFKYWAPQTSQNLVNATENDLLPADFVKSYHNTWKRIYEEGYVAKKCDLKRQIDQTLQKNIRYAREQLYEKLEQA</sequence>
<gene>
    <name type="primary">MIC27</name>
    <name type="ORF">AWRI1631_142180</name>
</gene>
<reference key="1">
    <citation type="journal article" date="2008" name="FEMS Yeast Res.">
        <title>Comparative genome analysis of a Saccharomyces cerevisiae wine strain.</title>
        <authorList>
            <person name="Borneman A.R."/>
            <person name="Forgan A.H."/>
            <person name="Pretorius I.S."/>
            <person name="Chambers P.J."/>
        </authorList>
    </citation>
    <scope>NUCLEOTIDE SEQUENCE [LARGE SCALE GENOMIC DNA]</scope>
    <source>
        <strain>AWRI1631</strain>
    </source>
</reference>
<evidence type="ECO:0000250" key="1"/>
<evidence type="ECO:0000255" key="2"/>
<evidence type="ECO:0000305" key="3"/>